<organism>
    <name type="scientific">Clostridium botulinum (strain ATCC 19397 / Type A)</name>
    <dbReference type="NCBI Taxonomy" id="441770"/>
    <lineage>
        <taxon>Bacteria</taxon>
        <taxon>Bacillati</taxon>
        <taxon>Bacillota</taxon>
        <taxon>Clostridia</taxon>
        <taxon>Eubacteriales</taxon>
        <taxon>Clostridiaceae</taxon>
        <taxon>Clostridium</taxon>
    </lineage>
</organism>
<proteinExistence type="inferred from homology"/>
<sequence>MIKEILKKADEKMGKTIVALKKELASMKAGRANPAMLDRIEAEYYGSMTPLNQLGNISVPEARVLLIQPWDKGALSAIEKAILKSDLGLNPSNDGTVIRLVIPELTEETRKNIVKTVKKTGEEAKVAIRSIRRDCNDDVKNLKKDDVSEDDIKKAEDDIQKKTDKYIKEIDSIISAKEKEILSI</sequence>
<name>RRF_CLOB1</name>
<evidence type="ECO:0000255" key="1">
    <source>
        <dbReference type="HAMAP-Rule" id="MF_00040"/>
    </source>
</evidence>
<gene>
    <name evidence="1" type="primary">frr</name>
    <name type="ordered locus">CLB_2296</name>
</gene>
<accession>A7FPZ5</accession>
<reference key="1">
    <citation type="journal article" date="2007" name="PLoS ONE">
        <title>Analysis of the neurotoxin complex genes in Clostridium botulinum A1-A4 and B1 strains: BoNT/A3, /Ba4 and /B1 clusters are located within plasmids.</title>
        <authorList>
            <person name="Smith T.J."/>
            <person name="Hill K.K."/>
            <person name="Foley B.T."/>
            <person name="Detter J.C."/>
            <person name="Munk A.C."/>
            <person name="Bruce D.C."/>
            <person name="Doggett N.A."/>
            <person name="Smith L.A."/>
            <person name="Marks J.D."/>
            <person name="Xie G."/>
            <person name="Brettin T.S."/>
        </authorList>
    </citation>
    <scope>NUCLEOTIDE SEQUENCE [LARGE SCALE GENOMIC DNA]</scope>
    <source>
        <strain>ATCC 19397 / Type A</strain>
    </source>
</reference>
<keyword id="KW-0963">Cytoplasm</keyword>
<keyword id="KW-0648">Protein biosynthesis</keyword>
<dbReference type="EMBL" id="CP000726">
    <property type="protein sequence ID" value="ABS34958.1"/>
    <property type="molecule type" value="Genomic_DNA"/>
</dbReference>
<dbReference type="RefSeq" id="WP_011986799.1">
    <property type="nucleotide sequence ID" value="NC_009697.1"/>
</dbReference>
<dbReference type="SMR" id="A7FPZ5"/>
<dbReference type="GeneID" id="5186687"/>
<dbReference type="KEGG" id="cba:CLB_2296"/>
<dbReference type="HOGENOM" id="CLU_073981_2_0_9"/>
<dbReference type="GO" id="GO:0005737">
    <property type="term" value="C:cytoplasm"/>
    <property type="evidence" value="ECO:0007669"/>
    <property type="project" value="UniProtKB-SubCell"/>
</dbReference>
<dbReference type="GO" id="GO:0043023">
    <property type="term" value="F:ribosomal large subunit binding"/>
    <property type="evidence" value="ECO:0007669"/>
    <property type="project" value="TreeGrafter"/>
</dbReference>
<dbReference type="GO" id="GO:0006415">
    <property type="term" value="P:translational termination"/>
    <property type="evidence" value="ECO:0007669"/>
    <property type="project" value="UniProtKB-UniRule"/>
</dbReference>
<dbReference type="CDD" id="cd00520">
    <property type="entry name" value="RRF"/>
    <property type="match status" value="1"/>
</dbReference>
<dbReference type="FunFam" id="1.10.132.20:FF:000001">
    <property type="entry name" value="Ribosome-recycling factor"/>
    <property type="match status" value="1"/>
</dbReference>
<dbReference type="FunFam" id="3.30.1360.40:FF:000001">
    <property type="entry name" value="Ribosome-recycling factor"/>
    <property type="match status" value="1"/>
</dbReference>
<dbReference type="Gene3D" id="3.30.1360.40">
    <property type="match status" value="1"/>
</dbReference>
<dbReference type="Gene3D" id="1.10.132.20">
    <property type="entry name" value="Ribosome-recycling factor"/>
    <property type="match status" value="1"/>
</dbReference>
<dbReference type="HAMAP" id="MF_00040">
    <property type="entry name" value="RRF"/>
    <property type="match status" value="1"/>
</dbReference>
<dbReference type="InterPro" id="IPR002661">
    <property type="entry name" value="Ribosome_recyc_fac"/>
</dbReference>
<dbReference type="InterPro" id="IPR023584">
    <property type="entry name" value="Ribosome_recyc_fac_dom"/>
</dbReference>
<dbReference type="InterPro" id="IPR036191">
    <property type="entry name" value="RRF_sf"/>
</dbReference>
<dbReference type="NCBIfam" id="TIGR00496">
    <property type="entry name" value="frr"/>
    <property type="match status" value="1"/>
</dbReference>
<dbReference type="PANTHER" id="PTHR20982:SF3">
    <property type="entry name" value="MITOCHONDRIAL RIBOSOME RECYCLING FACTOR PSEUDO 1"/>
    <property type="match status" value="1"/>
</dbReference>
<dbReference type="PANTHER" id="PTHR20982">
    <property type="entry name" value="RIBOSOME RECYCLING FACTOR"/>
    <property type="match status" value="1"/>
</dbReference>
<dbReference type="Pfam" id="PF01765">
    <property type="entry name" value="RRF"/>
    <property type="match status" value="1"/>
</dbReference>
<dbReference type="SUPFAM" id="SSF55194">
    <property type="entry name" value="Ribosome recycling factor, RRF"/>
    <property type="match status" value="1"/>
</dbReference>
<feature type="chain" id="PRO_1000003140" description="Ribosome-recycling factor">
    <location>
        <begin position="1"/>
        <end position="184"/>
    </location>
</feature>
<comment type="function">
    <text evidence="1">Responsible for the release of ribosomes from messenger RNA at the termination of protein biosynthesis. May increase the efficiency of translation by recycling ribosomes from one round of translation to another.</text>
</comment>
<comment type="subcellular location">
    <subcellularLocation>
        <location evidence="1">Cytoplasm</location>
    </subcellularLocation>
</comment>
<comment type="similarity">
    <text evidence="1">Belongs to the RRF family.</text>
</comment>
<protein>
    <recommendedName>
        <fullName evidence="1">Ribosome-recycling factor</fullName>
        <shortName evidence="1">RRF</shortName>
    </recommendedName>
    <alternativeName>
        <fullName evidence="1">Ribosome-releasing factor</fullName>
    </alternativeName>
</protein>